<comment type="function">
    <text evidence="1">Activates ribosomal RNA transcription. Plays a direct role in upstream activation of rRNA promoters.</text>
</comment>
<comment type="subunit">
    <text evidence="1">Homodimer.</text>
</comment>
<comment type="similarity">
    <text evidence="1">Belongs to the transcriptional regulatory Fis family.</text>
</comment>
<organism>
    <name type="scientific">Shewanella baltica (strain OS223)</name>
    <dbReference type="NCBI Taxonomy" id="407976"/>
    <lineage>
        <taxon>Bacteria</taxon>
        <taxon>Pseudomonadati</taxon>
        <taxon>Pseudomonadota</taxon>
        <taxon>Gammaproteobacteria</taxon>
        <taxon>Alteromonadales</taxon>
        <taxon>Shewanellaceae</taxon>
        <taxon>Shewanella</taxon>
    </lineage>
</organism>
<feature type="chain" id="PRO_1000123610" description="DNA-binding protein Fis">
    <location>
        <begin position="1"/>
        <end position="101"/>
    </location>
</feature>
<feature type="DNA-binding region" description="H-T-H motif" evidence="1">
    <location>
        <begin position="77"/>
        <end position="96"/>
    </location>
</feature>
<evidence type="ECO:0000255" key="1">
    <source>
        <dbReference type="HAMAP-Rule" id="MF_00166"/>
    </source>
</evidence>
<sequence length="101" mass="11390">MFDQTTNTEVHQLTVGKIETANGTIKPQLLRDAVKRAVTNFFAQLDGQEAQEVYEMVLSEVEAPLLDIIMQHTRGNQTRAANMLGINRGTLRKKLKKYGMN</sequence>
<protein>
    <recommendedName>
        <fullName evidence="1">DNA-binding protein Fis</fullName>
    </recommendedName>
</protein>
<gene>
    <name evidence="1" type="primary">fis</name>
    <name type="ordered locus">Sbal223_3888</name>
</gene>
<dbReference type="EMBL" id="CP001252">
    <property type="protein sequence ID" value="ACK48363.1"/>
    <property type="molecule type" value="Genomic_DNA"/>
</dbReference>
<dbReference type="RefSeq" id="WP_006083371.1">
    <property type="nucleotide sequence ID" value="NC_011663.1"/>
</dbReference>
<dbReference type="SMR" id="B8E682"/>
<dbReference type="GeneID" id="94726394"/>
<dbReference type="KEGG" id="sbp:Sbal223_3888"/>
<dbReference type="HOGENOM" id="CLU_158040_3_3_6"/>
<dbReference type="Proteomes" id="UP000002507">
    <property type="component" value="Chromosome"/>
</dbReference>
<dbReference type="GO" id="GO:0003700">
    <property type="term" value="F:DNA-binding transcription factor activity"/>
    <property type="evidence" value="ECO:0007669"/>
    <property type="project" value="UniProtKB-UniRule"/>
</dbReference>
<dbReference type="GO" id="GO:0043565">
    <property type="term" value="F:sequence-specific DNA binding"/>
    <property type="evidence" value="ECO:0007669"/>
    <property type="project" value="InterPro"/>
</dbReference>
<dbReference type="FunFam" id="1.10.10.60:FF:000006">
    <property type="entry name" value="DNA-binding protein Fis"/>
    <property type="match status" value="1"/>
</dbReference>
<dbReference type="Gene3D" id="1.10.10.60">
    <property type="entry name" value="Homeodomain-like"/>
    <property type="match status" value="1"/>
</dbReference>
<dbReference type="HAMAP" id="MF_00166">
    <property type="entry name" value="DNA_binding_Fis"/>
    <property type="match status" value="1"/>
</dbReference>
<dbReference type="InterPro" id="IPR005412">
    <property type="entry name" value="Fis_DNA-bd"/>
</dbReference>
<dbReference type="InterPro" id="IPR009057">
    <property type="entry name" value="Homeodomain-like_sf"/>
</dbReference>
<dbReference type="InterPro" id="IPR002197">
    <property type="entry name" value="HTH_Fis"/>
</dbReference>
<dbReference type="InterPro" id="IPR050207">
    <property type="entry name" value="Trans_regulatory_Fis"/>
</dbReference>
<dbReference type="NCBIfam" id="NF001659">
    <property type="entry name" value="PRK00430.1"/>
    <property type="match status" value="1"/>
</dbReference>
<dbReference type="PANTHER" id="PTHR47918">
    <property type="entry name" value="DNA-BINDING PROTEIN FIS"/>
    <property type="match status" value="1"/>
</dbReference>
<dbReference type="PANTHER" id="PTHR47918:SF1">
    <property type="entry name" value="DNA-BINDING PROTEIN FIS"/>
    <property type="match status" value="1"/>
</dbReference>
<dbReference type="Pfam" id="PF02954">
    <property type="entry name" value="HTH_8"/>
    <property type="match status" value="1"/>
</dbReference>
<dbReference type="PIRSF" id="PIRSF002097">
    <property type="entry name" value="DNA-binding_Fis"/>
    <property type="match status" value="1"/>
</dbReference>
<dbReference type="PRINTS" id="PR01591">
    <property type="entry name" value="DNABINDNGFIS"/>
</dbReference>
<dbReference type="PRINTS" id="PR01590">
    <property type="entry name" value="HTHFIS"/>
</dbReference>
<dbReference type="SUPFAM" id="SSF46689">
    <property type="entry name" value="Homeodomain-like"/>
    <property type="match status" value="1"/>
</dbReference>
<proteinExistence type="inferred from homology"/>
<accession>B8E682</accession>
<name>FIS_SHEB2</name>
<reference key="1">
    <citation type="submission" date="2008-12" db="EMBL/GenBank/DDBJ databases">
        <title>Complete sequence of chromosome of Shewanella baltica OS223.</title>
        <authorList>
            <consortium name="US DOE Joint Genome Institute"/>
            <person name="Lucas S."/>
            <person name="Copeland A."/>
            <person name="Lapidus A."/>
            <person name="Glavina del Rio T."/>
            <person name="Dalin E."/>
            <person name="Tice H."/>
            <person name="Bruce D."/>
            <person name="Goodwin L."/>
            <person name="Pitluck S."/>
            <person name="Chertkov O."/>
            <person name="Meincke L."/>
            <person name="Brettin T."/>
            <person name="Detter J.C."/>
            <person name="Han C."/>
            <person name="Kuske C.R."/>
            <person name="Larimer F."/>
            <person name="Land M."/>
            <person name="Hauser L."/>
            <person name="Kyrpides N."/>
            <person name="Ovchinnikova G."/>
            <person name="Brettar I."/>
            <person name="Rodrigues J."/>
            <person name="Konstantinidis K."/>
            <person name="Tiedje J."/>
        </authorList>
    </citation>
    <scope>NUCLEOTIDE SEQUENCE [LARGE SCALE GENOMIC DNA]</scope>
    <source>
        <strain>OS223</strain>
    </source>
</reference>
<keyword id="KW-0010">Activator</keyword>
<keyword id="KW-0238">DNA-binding</keyword>
<keyword id="KW-0804">Transcription</keyword>
<keyword id="KW-0805">Transcription regulation</keyword>